<accession>Q54RY8</accession>
<evidence type="ECO:0000250" key="1"/>
<evidence type="ECO:0000305" key="2"/>
<sequence length="99" mass="11637">MAPTLLTEEQRKELIPKDWEMVVGRDAIKKTFTFKDFNQAFSFMTRVALVAEQMNHHPEWFNVYNRVEITLATHDCSGLSVNDTKMADIMNQFFNQLHQ</sequence>
<protein>
    <recommendedName>
        <fullName>Pterin-4-alpha-carbinolamine dehydratase</fullName>
        <shortName>PHS</shortName>
        <ecNumber>4.2.1.96</ecNumber>
    </recommendedName>
    <alternativeName>
        <fullName>4-alpha-hydroxy-tetrahydropterin dehydratase</fullName>
    </alternativeName>
    <alternativeName>
        <fullName>Pterin carbinolamine dehydratase</fullName>
        <shortName>PCD</shortName>
    </alternativeName>
</protein>
<keyword id="KW-0456">Lyase</keyword>
<keyword id="KW-1185">Reference proteome</keyword>
<keyword id="KW-0783">Tetrahydrobiopterin biosynthesis</keyword>
<reference key="1">
    <citation type="journal article" date="2005" name="Nature">
        <title>The genome of the social amoeba Dictyostelium discoideum.</title>
        <authorList>
            <person name="Eichinger L."/>
            <person name="Pachebat J.A."/>
            <person name="Gloeckner G."/>
            <person name="Rajandream M.A."/>
            <person name="Sucgang R."/>
            <person name="Berriman M."/>
            <person name="Song J."/>
            <person name="Olsen R."/>
            <person name="Szafranski K."/>
            <person name="Xu Q."/>
            <person name="Tunggal B."/>
            <person name="Kummerfeld S."/>
            <person name="Madera M."/>
            <person name="Konfortov B.A."/>
            <person name="Rivero F."/>
            <person name="Bankier A.T."/>
            <person name="Lehmann R."/>
            <person name="Hamlin N."/>
            <person name="Davies R."/>
            <person name="Gaudet P."/>
            <person name="Fey P."/>
            <person name="Pilcher K."/>
            <person name="Chen G."/>
            <person name="Saunders D."/>
            <person name="Sodergren E.J."/>
            <person name="Davis P."/>
            <person name="Kerhornou A."/>
            <person name="Nie X."/>
            <person name="Hall N."/>
            <person name="Anjard C."/>
            <person name="Hemphill L."/>
            <person name="Bason N."/>
            <person name="Farbrother P."/>
            <person name="Desany B."/>
            <person name="Just E."/>
            <person name="Morio T."/>
            <person name="Rost R."/>
            <person name="Churcher C.M."/>
            <person name="Cooper J."/>
            <person name="Haydock S."/>
            <person name="van Driessche N."/>
            <person name="Cronin A."/>
            <person name="Goodhead I."/>
            <person name="Muzny D.M."/>
            <person name="Mourier T."/>
            <person name="Pain A."/>
            <person name="Lu M."/>
            <person name="Harper D."/>
            <person name="Lindsay R."/>
            <person name="Hauser H."/>
            <person name="James K.D."/>
            <person name="Quiles M."/>
            <person name="Madan Babu M."/>
            <person name="Saito T."/>
            <person name="Buchrieser C."/>
            <person name="Wardroper A."/>
            <person name="Felder M."/>
            <person name="Thangavelu M."/>
            <person name="Johnson D."/>
            <person name="Knights A."/>
            <person name="Loulseged H."/>
            <person name="Mungall K.L."/>
            <person name="Oliver K."/>
            <person name="Price C."/>
            <person name="Quail M.A."/>
            <person name="Urushihara H."/>
            <person name="Hernandez J."/>
            <person name="Rabbinowitsch E."/>
            <person name="Steffen D."/>
            <person name="Sanders M."/>
            <person name="Ma J."/>
            <person name="Kohara Y."/>
            <person name="Sharp S."/>
            <person name="Simmonds M.N."/>
            <person name="Spiegler S."/>
            <person name="Tivey A."/>
            <person name="Sugano S."/>
            <person name="White B."/>
            <person name="Walker D."/>
            <person name="Woodward J.R."/>
            <person name="Winckler T."/>
            <person name="Tanaka Y."/>
            <person name="Shaulsky G."/>
            <person name="Schleicher M."/>
            <person name="Weinstock G.M."/>
            <person name="Rosenthal A."/>
            <person name="Cox E.C."/>
            <person name="Chisholm R.L."/>
            <person name="Gibbs R.A."/>
            <person name="Loomis W.F."/>
            <person name="Platzer M."/>
            <person name="Kay R.R."/>
            <person name="Williams J.G."/>
            <person name="Dear P.H."/>
            <person name="Noegel A.A."/>
            <person name="Barrell B.G."/>
            <person name="Kuspa A."/>
        </authorList>
    </citation>
    <scope>NUCLEOTIDE SEQUENCE [LARGE SCALE GENOMIC DNA]</scope>
    <source>
        <strain>AX4</strain>
    </source>
</reference>
<organism>
    <name type="scientific">Dictyostelium discoideum</name>
    <name type="common">Social amoeba</name>
    <dbReference type="NCBI Taxonomy" id="44689"/>
    <lineage>
        <taxon>Eukaryota</taxon>
        <taxon>Amoebozoa</taxon>
        <taxon>Evosea</taxon>
        <taxon>Eumycetozoa</taxon>
        <taxon>Dictyostelia</taxon>
        <taxon>Dictyosteliales</taxon>
        <taxon>Dictyosteliaceae</taxon>
        <taxon>Dictyostelium</taxon>
    </lineage>
</organism>
<dbReference type="EC" id="4.2.1.96"/>
<dbReference type="EMBL" id="AAFI02000047">
    <property type="protein sequence ID" value="EAL65995.1"/>
    <property type="molecule type" value="Genomic_DNA"/>
</dbReference>
<dbReference type="RefSeq" id="XP_639349.1">
    <property type="nucleotide sequence ID" value="XM_634257.1"/>
</dbReference>
<dbReference type="SMR" id="Q54RY8"/>
<dbReference type="FunCoup" id="Q54RY8">
    <property type="interactions" value="1"/>
</dbReference>
<dbReference type="STRING" id="44689.Q54RY8"/>
<dbReference type="PaxDb" id="44689-DDB0305045"/>
<dbReference type="EnsemblProtists" id="EAL65995">
    <property type="protein sequence ID" value="EAL65995"/>
    <property type="gene ID" value="DDB_G0282831"/>
</dbReference>
<dbReference type="GeneID" id="8623790"/>
<dbReference type="KEGG" id="ddi:DDB_G0282831"/>
<dbReference type="dictyBase" id="DDB_G0282831">
    <property type="gene designation" value="pcbd"/>
</dbReference>
<dbReference type="VEuPathDB" id="AmoebaDB:DDB_G0282831"/>
<dbReference type="eggNOG" id="KOG4073">
    <property type="taxonomic scope" value="Eukaryota"/>
</dbReference>
<dbReference type="HOGENOM" id="CLU_081974_3_2_1"/>
<dbReference type="InParanoid" id="Q54RY8"/>
<dbReference type="OMA" id="RWLSKMA"/>
<dbReference type="PhylomeDB" id="Q54RY8"/>
<dbReference type="Reactome" id="R-DDI-8964208">
    <property type="pathway name" value="Phenylalanine metabolism"/>
</dbReference>
<dbReference type="PRO" id="PR:Q54RY8"/>
<dbReference type="Proteomes" id="UP000002195">
    <property type="component" value="Chromosome 3"/>
</dbReference>
<dbReference type="GO" id="GO:0008124">
    <property type="term" value="F:4-alpha-hydroxytetrahydrobiopterin dehydratase activity"/>
    <property type="evidence" value="ECO:0000318"/>
    <property type="project" value="GO_Central"/>
</dbReference>
<dbReference type="GO" id="GO:0006729">
    <property type="term" value="P:tetrahydrobiopterin biosynthetic process"/>
    <property type="evidence" value="ECO:0007669"/>
    <property type="project" value="UniProtKB-KW"/>
</dbReference>
<dbReference type="CDD" id="cd00914">
    <property type="entry name" value="PCD_DCoH_subfamily_b"/>
    <property type="match status" value="1"/>
</dbReference>
<dbReference type="Gene3D" id="3.30.1360.20">
    <property type="entry name" value="Transcriptional coactivator/pterin dehydratase"/>
    <property type="match status" value="1"/>
</dbReference>
<dbReference type="HAMAP" id="MF_00434">
    <property type="entry name" value="Pterin_4_alpha"/>
    <property type="match status" value="1"/>
</dbReference>
<dbReference type="InterPro" id="IPR036428">
    <property type="entry name" value="PCD_sf"/>
</dbReference>
<dbReference type="InterPro" id="IPR001533">
    <property type="entry name" value="Pterin_deHydtase"/>
</dbReference>
<dbReference type="NCBIfam" id="NF002018">
    <property type="entry name" value="PRK00823.1-3"/>
    <property type="match status" value="1"/>
</dbReference>
<dbReference type="PANTHER" id="PTHR12599">
    <property type="entry name" value="PTERIN-4-ALPHA-CARBINOLAMINE DEHYDRATASE"/>
    <property type="match status" value="1"/>
</dbReference>
<dbReference type="PANTHER" id="PTHR12599:SF0">
    <property type="entry name" value="PTERIN-4-ALPHA-CARBINOLAMINE DEHYDRATASE"/>
    <property type="match status" value="1"/>
</dbReference>
<dbReference type="Pfam" id="PF01329">
    <property type="entry name" value="Pterin_4a"/>
    <property type="match status" value="1"/>
</dbReference>
<dbReference type="SUPFAM" id="SSF55248">
    <property type="entry name" value="PCD-like"/>
    <property type="match status" value="1"/>
</dbReference>
<name>PHS_DICDI</name>
<gene>
    <name type="primary">pcbd</name>
    <name type="ORF">DDB_G0282831</name>
</gene>
<comment type="function">
    <text evidence="1">Involved in tetrahydrobiopterin biosynthesis.</text>
</comment>
<comment type="catalytic activity">
    <reaction>
        <text>(4aS,6R)-4a-hydroxy-L-erythro-5,6,7,8-tetrahydrobiopterin = (6R)-L-erythro-6,7-dihydrobiopterin + H2O</text>
        <dbReference type="Rhea" id="RHEA:11920"/>
        <dbReference type="ChEBI" id="CHEBI:15377"/>
        <dbReference type="ChEBI" id="CHEBI:15642"/>
        <dbReference type="ChEBI" id="CHEBI:43120"/>
        <dbReference type="EC" id="4.2.1.96"/>
    </reaction>
</comment>
<comment type="similarity">
    <text evidence="2">Belongs to the pterin-4-alpha-carbinolamine dehydratase family.</text>
</comment>
<proteinExistence type="inferred from homology"/>
<feature type="chain" id="PRO_0000328517" description="Pterin-4-alpha-carbinolamine dehydratase">
    <location>
        <begin position="1"/>
        <end position="99"/>
    </location>
</feature>